<gene>
    <name evidence="1" type="primary">rpsE</name>
    <name type="ordered locus">SARI_04206</name>
</gene>
<comment type="function">
    <text evidence="1">With S4 and S12 plays an important role in translational accuracy.</text>
</comment>
<comment type="function">
    <text evidence="1">Located at the back of the 30S subunit body where it stabilizes the conformation of the head with respect to the body.</text>
</comment>
<comment type="subunit">
    <text evidence="1">Part of the 30S ribosomal subunit. Contacts proteins S4 and S8.</text>
</comment>
<comment type="domain">
    <text>The N-terminal domain interacts with the head of the 30S subunit; the C-terminal domain interacts with the body and contacts protein S4. The interaction surface between S4 and S5 is involved in control of translational fidelity.</text>
</comment>
<comment type="similarity">
    <text evidence="1">Belongs to the universal ribosomal protein uS5 family.</text>
</comment>
<organism>
    <name type="scientific">Salmonella arizonae (strain ATCC BAA-731 / CDC346-86 / RSK2980)</name>
    <dbReference type="NCBI Taxonomy" id="41514"/>
    <lineage>
        <taxon>Bacteria</taxon>
        <taxon>Pseudomonadati</taxon>
        <taxon>Pseudomonadota</taxon>
        <taxon>Gammaproteobacteria</taxon>
        <taxon>Enterobacterales</taxon>
        <taxon>Enterobacteriaceae</taxon>
        <taxon>Salmonella</taxon>
    </lineage>
</organism>
<evidence type="ECO:0000255" key="1">
    <source>
        <dbReference type="HAMAP-Rule" id="MF_01307"/>
    </source>
</evidence>
<evidence type="ECO:0000305" key="2"/>
<dbReference type="EMBL" id="CP000880">
    <property type="protein sequence ID" value="ABX23995.1"/>
    <property type="molecule type" value="Genomic_DNA"/>
</dbReference>
<dbReference type="SMR" id="A9MN66"/>
<dbReference type="STRING" id="41514.SARI_04206"/>
<dbReference type="KEGG" id="ses:SARI_04206"/>
<dbReference type="HOGENOM" id="CLU_065898_2_2_6"/>
<dbReference type="Proteomes" id="UP000002084">
    <property type="component" value="Chromosome"/>
</dbReference>
<dbReference type="GO" id="GO:0015935">
    <property type="term" value="C:small ribosomal subunit"/>
    <property type="evidence" value="ECO:0007669"/>
    <property type="project" value="InterPro"/>
</dbReference>
<dbReference type="GO" id="GO:0019843">
    <property type="term" value="F:rRNA binding"/>
    <property type="evidence" value="ECO:0007669"/>
    <property type="project" value="UniProtKB-UniRule"/>
</dbReference>
<dbReference type="GO" id="GO:0003735">
    <property type="term" value="F:structural constituent of ribosome"/>
    <property type="evidence" value="ECO:0007669"/>
    <property type="project" value="InterPro"/>
</dbReference>
<dbReference type="GO" id="GO:0006412">
    <property type="term" value="P:translation"/>
    <property type="evidence" value="ECO:0007669"/>
    <property type="project" value="UniProtKB-UniRule"/>
</dbReference>
<dbReference type="FunFam" id="3.30.160.20:FF:000001">
    <property type="entry name" value="30S ribosomal protein S5"/>
    <property type="match status" value="1"/>
</dbReference>
<dbReference type="FunFam" id="3.30.230.10:FF:000002">
    <property type="entry name" value="30S ribosomal protein S5"/>
    <property type="match status" value="1"/>
</dbReference>
<dbReference type="Gene3D" id="3.30.160.20">
    <property type="match status" value="1"/>
</dbReference>
<dbReference type="Gene3D" id="3.30.230.10">
    <property type="match status" value="1"/>
</dbReference>
<dbReference type="HAMAP" id="MF_01307_B">
    <property type="entry name" value="Ribosomal_uS5_B"/>
    <property type="match status" value="1"/>
</dbReference>
<dbReference type="InterPro" id="IPR020568">
    <property type="entry name" value="Ribosomal_Su5_D2-typ_SF"/>
</dbReference>
<dbReference type="InterPro" id="IPR000851">
    <property type="entry name" value="Ribosomal_uS5"/>
</dbReference>
<dbReference type="InterPro" id="IPR005712">
    <property type="entry name" value="Ribosomal_uS5_bac-type"/>
</dbReference>
<dbReference type="InterPro" id="IPR005324">
    <property type="entry name" value="Ribosomal_uS5_C"/>
</dbReference>
<dbReference type="InterPro" id="IPR013810">
    <property type="entry name" value="Ribosomal_uS5_N"/>
</dbReference>
<dbReference type="InterPro" id="IPR018192">
    <property type="entry name" value="Ribosomal_uS5_N_CS"/>
</dbReference>
<dbReference type="InterPro" id="IPR014721">
    <property type="entry name" value="Ribsml_uS5_D2-typ_fold_subgr"/>
</dbReference>
<dbReference type="NCBIfam" id="TIGR01021">
    <property type="entry name" value="rpsE_bact"/>
    <property type="match status" value="1"/>
</dbReference>
<dbReference type="PANTHER" id="PTHR48277">
    <property type="entry name" value="MITOCHONDRIAL RIBOSOMAL PROTEIN S5"/>
    <property type="match status" value="1"/>
</dbReference>
<dbReference type="PANTHER" id="PTHR48277:SF1">
    <property type="entry name" value="MITOCHONDRIAL RIBOSOMAL PROTEIN S5"/>
    <property type="match status" value="1"/>
</dbReference>
<dbReference type="Pfam" id="PF00333">
    <property type="entry name" value="Ribosomal_S5"/>
    <property type="match status" value="1"/>
</dbReference>
<dbReference type="Pfam" id="PF03719">
    <property type="entry name" value="Ribosomal_S5_C"/>
    <property type="match status" value="1"/>
</dbReference>
<dbReference type="SUPFAM" id="SSF54768">
    <property type="entry name" value="dsRNA-binding domain-like"/>
    <property type="match status" value="1"/>
</dbReference>
<dbReference type="SUPFAM" id="SSF54211">
    <property type="entry name" value="Ribosomal protein S5 domain 2-like"/>
    <property type="match status" value="1"/>
</dbReference>
<dbReference type="PROSITE" id="PS00585">
    <property type="entry name" value="RIBOSOMAL_S5"/>
    <property type="match status" value="1"/>
</dbReference>
<dbReference type="PROSITE" id="PS50881">
    <property type="entry name" value="S5_DSRBD"/>
    <property type="match status" value="1"/>
</dbReference>
<proteinExistence type="inferred from homology"/>
<reference key="1">
    <citation type="submission" date="2007-11" db="EMBL/GenBank/DDBJ databases">
        <authorList>
            <consortium name="The Salmonella enterica serovar Arizonae Genome Sequencing Project"/>
            <person name="McClelland M."/>
            <person name="Sanderson E.K."/>
            <person name="Porwollik S."/>
            <person name="Spieth J."/>
            <person name="Clifton W.S."/>
            <person name="Fulton R."/>
            <person name="Chunyan W."/>
            <person name="Wollam A."/>
            <person name="Shah N."/>
            <person name="Pepin K."/>
            <person name="Bhonagiri V."/>
            <person name="Nash W."/>
            <person name="Johnson M."/>
            <person name="Thiruvilangam P."/>
            <person name="Wilson R."/>
        </authorList>
    </citation>
    <scope>NUCLEOTIDE SEQUENCE [LARGE SCALE GENOMIC DNA]</scope>
    <source>
        <strain>ATCC BAA-731 / CDC346-86 / RSK2980</strain>
    </source>
</reference>
<feature type="chain" id="PRO_1000086052" description="Small ribosomal subunit protein uS5">
    <location>
        <begin position="1"/>
        <end position="167"/>
    </location>
</feature>
<feature type="domain" description="S5 DRBM" evidence="1">
    <location>
        <begin position="11"/>
        <end position="74"/>
    </location>
</feature>
<keyword id="KW-1185">Reference proteome</keyword>
<keyword id="KW-0687">Ribonucleoprotein</keyword>
<keyword id="KW-0689">Ribosomal protein</keyword>
<keyword id="KW-0694">RNA-binding</keyword>
<keyword id="KW-0699">rRNA-binding</keyword>
<accession>A9MN66</accession>
<protein>
    <recommendedName>
        <fullName evidence="1">Small ribosomal subunit protein uS5</fullName>
    </recommendedName>
    <alternativeName>
        <fullName evidence="2">30S ribosomal protein S5</fullName>
    </alternativeName>
</protein>
<sequence length="167" mass="17603">MAHIEKQAGELQEKLIAVNRVSKTVKGGRIFSFTALTVVGDGNGRVGFGYGKAREVPAAIQKAMEKARRNMINVALNNGTLQHPVKGVHTGSRVFMQPASEGTGIIAGGAMRAVLEVAGVHNVLAKAYGSTNPINVVRATIDGLENMNSPEMVAAKRGKSVEEILGK</sequence>
<name>RS5_SALAR</name>